<organism>
    <name type="scientific">Bos taurus</name>
    <name type="common">Bovine</name>
    <dbReference type="NCBI Taxonomy" id="9913"/>
    <lineage>
        <taxon>Eukaryota</taxon>
        <taxon>Metazoa</taxon>
        <taxon>Chordata</taxon>
        <taxon>Craniata</taxon>
        <taxon>Vertebrata</taxon>
        <taxon>Euteleostomi</taxon>
        <taxon>Mammalia</taxon>
        <taxon>Eutheria</taxon>
        <taxon>Laurasiatheria</taxon>
        <taxon>Artiodactyla</taxon>
        <taxon>Ruminantia</taxon>
        <taxon>Pecora</taxon>
        <taxon>Bovidae</taxon>
        <taxon>Bovinae</taxon>
        <taxon>Bos</taxon>
    </lineage>
</organism>
<sequence>MYSVEDLLISHGYKLSRKLPAPHEDDGERRQPARTTVPAGPGLLNGCDDGPAALPRGKASPGTGLLSDPESRRLGPRGHGERPSTAAAARISEAGFYHQPVLAWSSQPLTGRSHAYWRRREQEAREDPGGRGPVPSLPTHPREGPWEVGGRSEHVMKKAVWEDELGMAGPARWQDVSVRSWNQPPRLGRQMSDGVGEKLFQDLYPFMLGEHGLTSQSKGKSQSLPRVLSPESLSCMEVPIPLSDGHLPGVPKVPLQPPNCASNLESTRNPKKAGTSAPLPQPRFGRPLKPPSYGSQPHSKAGAENGSYTDSRQLDPGAAHSARTNSARQDLYGPDPGLEPPVYVPPPSYKSPPQPAAHPCPEEAVSRHEGRGRRVPQHPMERPAAGGQPLSGSRGAGSEWGASPCSPVGVPPQPHHTTAYDGSILIIPFDDPRIRHIKLPRPHGFWEDVKLDGAVPAPDPRSLQQEGAVWGPSGKERGPAPADPSPSWLWGQPPRNGENGSSPDQRDPCIVTQRKQPDVSGSPQEYPESLVSSPSPQGESSCEMQTQLRKFEAGLQPKRSSKKKTSETIFCLVSIPVKSESQLPGTDTNNNDLKQSASLQEQSVLSLSSTDLELQALTGSMATRTELPRPDPGGPGRGRQADDLRFPSPAKHRALAWPGPWPGHHFRDQQTQTSFAHEPQSLQPLPGERPGGSPDPVLPPRCLDPAPFEVQMHMALASSDPNQRPGAHSPKSQGSLSPSSNSAFSGSSWPRNQGPVPRASLGQQGSDGPGRRASPVSRGEVIKGETTGPCNSRQLFGQFLLKPVSRRPWDLISQLESFNKELQEEEGSSGSSSDGSGSEDSDTELPWGSCARPAPQLPGLLKDIVPEDPRTRPGRVKSKSESWSEEGRPRSPRPWQAEGRGSVWLSPPGSWIAEDGDREVEDRVAQLAVSPRPVKRAISSGLNDAKPEPPPDPAEQREPLPSQELPGSRGAVELSAAGPPRAGGGEQGSTRAPLSLAGKSRGLSAPDLRSVGLTLVQEHSTSQLAGSPGDANAIEIPPNESLEARAARILGIEVAVESLLPGAQRAGQRRHPEPDGSALRPESPRQEAAASLAQPNESTAPADAFYGRRKCGWTKSPLFVGERDSTRQVPRASEPADVDGAVPTKAPETPPSPLESQPFLPKDVETKPPFRSTLFHFIERTPNLAFSEKKLRNTSRVIESLQEKLVSPPRKADPDRLTRMKEVSSVSRMRLLTSRAADSAEEPKAERGPGAWLGGLVAPSAGHKLSDPQGALSLEADGHPAARRENGGRDFWCPDSYDPSRVERV</sequence>
<comment type="subcellular location">
    <subcellularLocation>
        <location evidence="1">Cell junction</location>
        <location evidence="1">Adherens junction</location>
    </subcellularLocation>
    <text evidence="1">Colocalizes with CDH5/VE-Cadherin in endothelial cells but not in epithelial cells.</text>
</comment>
<feature type="chain" id="PRO_0000314184" description="Junctional cadherin 5-associated protein">
    <location>
        <begin position="1"/>
        <end position="1305"/>
    </location>
</feature>
<feature type="region of interest" description="Disordered" evidence="3">
    <location>
        <begin position="13"/>
        <end position="86"/>
    </location>
</feature>
<feature type="region of interest" description="Disordered" evidence="3">
    <location>
        <begin position="120"/>
        <end position="151"/>
    </location>
</feature>
<feature type="region of interest" description="Disordered" evidence="3">
    <location>
        <begin position="249"/>
        <end position="419"/>
    </location>
</feature>
<feature type="region of interest" description="Disordered" evidence="3">
    <location>
        <begin position="450"/>
        <end position="545"/>
    </location>
</feature>
<feature type="region of interest" description="Disordered" evidence="3">
    <location>
        <begin position="575"/>
        <end position="604"/>
    </location>
</feature>
<feature type="region of interest" description="Disordered" evidence="3">
    <location>
        <begin position="616"/>
        <end position="795"/>
    </location>
</feature>
<feature type="region of interest" description="Disordered" evidence="3">
    <location>
        <begin position="818"/>
        <end position="1005"/>
    </location>
</feature>
<feature type="region of interest" description="Disordered" evidence="3">
    <location>
        <begin position="1062"/>
        <end position="1166"/>
    </location>
</feature>
<feature type="region of interest" description="Disordered" evidence="3">
    <location>
        <begin position="1234"/>
        <end position="1305"/>
    </location>
</feature>
<feature type="compositionally biased region" description="Basic and acidic residues" evidence="3">
    <location>
        <begin position="21"/>
        <end position="31"/>
    </location>
</feature>
<feature type="compositionally biased region" description="Basic and acidic residues" evidence="3">
    <location>
        <begin position="69"/>
        <end position="82"/>
    </location>
</feature>
<feature type="compositionally biased region" description="Basic and acidic residues" evidence="3">
    <location>
        <begin position="120"/>
        <end position="129"/>
    </location>
</feature>
<feature type="compositionally biased region" description="Basic and acidic residues" evidence="3">
    <location>
        <begin position="140"/>
        <end position="151"/>
    </location>
</feature>
<feature type="compositionally biased region" description="Pro residues" evidence="3">
    <location>
        <begin position="337"/>
        <end position="358"/>
    </location>
</feature>
<feature type="compositionally biased region" description="Basic and acidic residues" evidence="3">
    <location>
        <begin position="360"/>
        <end position="369"/>
    </location>
</feature>
<feature type="compositionally biased region" description="Polar residues" evidence="3">
    <location>
        <begin position="530"/>
        <end position="545"/>
    </location>
</feature>
<feature type="compositionally biased region" description="Polar residues" evidence="3">
    <location>
        <begin position="579"/>
        <end position="594"/>
    </location>
</feature>
<feature type="compositionally biased region" description="Low complexity" evidence="3">
    <location>
        <begin position="595"/>
        <end position="604"/>
    </location>
</feature>
<feature type="compositionally biased region" description="Polar residues" evidence="3">
    <location>
        <begin position="669"/>
        <end position="683"/>
    </location>
</feature>
<feature type="compositionally biased region" description="Low complexity" evidence="3">
    <location>
        <begin position="729"/>
        <end position="748"/>
    </location>
</feature>
<feature type="compositionally biased region" description="Basic and acidic residues" evidence="3">
    <location>
        <begin position="878"/>
        <end position="889"/>
    </location>
</feature>
<feature type="compositionally biased region" description="Basic and acidic residues" evidence="3">
    <location>
        <begin position="945"/>
        <end position="958"/>
    </location>
</feature>
<feature type="compositionally biased region" description="Basic and acidic residues" evidence="3">
    <location>
        <begin position="1276"/>
        <end position="1288"/>
    </location>
</feature>
<feature type="modified residue" description="Phosphoserine" evidence="1">
    <location>
        <position position="841"/>
    </location>
</feature>
<feature type="modified residue" description="Phosphoserine" evidence="2">
    <location>
        <position position="1004"/>
    </location>
</feature>
<feature type="modified residue" description="Phosphoserine" evidence="1">
    <location>
        <position position="1010"/>
    </location>
</feature>
<feature type="modified residue" description="Phosphoserine" evidence="2">
    <location>
        <position position="1152"/>
    </location>
</feature>
<feature type="modified residue" description="Phosphoserine" evidence="1">
    <location>
        <position position="1239"/>
    </location>
</feature>
<proteinExistence type="evidence at transcript level"/>
<accession>A2VE02</accession>
<evidence type="ECO:0000250" key="1">
    <source>
        <dbReference type="UniProtKB" id="Q5DTX6"/>
    </source>
</evidence>
<evidence type="ECO:0000250" key="2">
    <source>
        <dbReference type="UniProtKB" id="Q9P266"/>
    </source>
</evidence>
<evidence type="ECO:0000256" key="3">
    <source>
        <dbReference type="SAM" id="MobiDB-lite"/>
    </source>
</evidence>
<evidence type="ECO:0000305" key="4"/>
<keyword id="KW-0130">Cell adhesion</keyword>
<keyword id="KW-0965">Cell junction</keyword>
<keyword id="KW-0597">Phosphoprotein</keyword>
<keyword id="KW-1185">Reference proteome</keyword>
<protein>
    <recommendedName>
        <fullName evidence="4">Junctional cadherin 5-associated protein</fullName>
    </recommendedName>
    <alternativeName>
        <fullName>Junctional protein associated with coronary artery disease homolog</fullName>
        <shortName>JCAD</shortName>
    </alternativeName>
</protein>
<gene>
    <name type="primary">JCAD</name>
</gene>
<reference key="1">
    <citation type="submission" date="2007-02" db="EMBL/GenBank/DDBJ databases">
        <authorList>
            <consortium name="NIH - Mammalian Gene Collection (MGC) project"/>
        </authorList>
    </citation>
    <scope>NUCLEOTIDE SEQUENCE [LARGE SCALE MRNA]</scope>
    <source>
        <strain>Hereford</strain>
        <tissue>Hypothalamus</tissue>
    </source>
</reference>
<name>JCAD_BOVIN</name>
<dbReference type="EMBL" id="BC133502">
    <property type="protein sequence ID" value="AAI33503.1"/>
    <property type="molecule type" value="mRNA"/>
</dbReference>
<dbReference type="RefSeq" id="NP_001075943.1">
    <property type="nucleotide sequence ID" value="NM_001082474.2"/>
</dbReference>
<dbReference type="RefSeq" id="XP_024856647.1">
    <property type="nucleotide sequence ID" value="XM_025000879.2"/>
</dbReference>
<dbReference type="FunCoup" id="A2VE02">
    <property type="interactions" value="318"/>
</dbReference>
<dbReference type="PaxDb" id="9913-ENSBTAP00000001595"/>
<dbReference type="GeneID" id="784675"/>
<dbReference type="KEGG" id="bta:784675"/>
<dbReference type="CTD" id="57608"/>
<dbReference type="VEuPathDB" id="HostDB:ENSBTAG00000001204"/>
<dbReference type="eggNOG" id="ENOG502QURJ">
    <property type="taxonomic scope" value="Eukaryota"/>
</dbReference>
<dbReference type="HOGENOM" id="CLU_005347_0_0_1"/>
<dbReference type="InParanoid" id="A2VE02"/>
<dbReference type="OMA" id="DERGCRQ"/>
<dbReference type="OrthoDB" id="8669630at2759"/>
<dbReference type="Proteomes" id="UP000009136">
    <property type="component" value="Chromosome 13"/>
</dbReference>
<dbReference type="Bgee" id="ENSBTAG00000001204">
    <property type="expression patterns" value="Expressed in ampulla of uterine tube and 105 other cell types or tissues"/>
</dbReference>
<dbReference type="GO" id="GO:0005912">
    <property type="term" value="C:adherens junction"/>
    <property type="evidence" value="ECO:0000318"/>
    <property type="project" value="GO_Central"/>
</dbReference>
<dbReference type="GO" id="GO:0032587">
    <property type="term" value="C:ruffle membrane"/>
    <property type="evidence" value="ECO:0000318"/>
    <property type="project" value="GO_Central"/>
</dbReference>
<dbReference type="GO" id="GO:0007155">
    <property type="term" value="P:cell adhesion"/>
    <property type="evidence" value="ECO:0007669"/>
    <property type="project" value="UniProtKB-KW"/>
</dbReference>
<dbReference type="GO" id="GO:1903589">
    <property type="term" value="P:positive regulation of blood vessel endothelial cell proliferation involved in sprouting angiogenesis"/>
    <property type="evidence" value="ECO:0000318"/>
    <property type="project" value="GO_Central"/>
</dbReference>
<dbReference type="InterPro" id="IPR028221">
    <property type="entry name" value="JCAD"/>
</dbReference>
<dbReference type="PANTHER" id="PTHR34757:SF1">
    <property type="entry name" value="JUNCTIONAL CADHERIN 5-ASSOCIATED PROTEIN"/>
    <property type="match status" value="1"/>
</dbReference>
<dbReference type="PANTHER" id="PTHR34757">
    <property type="entry name" value="JUNCTIONAL PROTEIN ASSOCIATED WITH CORONARY ARTERY DISEASE"/>
    <property type="match status" value="1"/>
</dbReference>
<dbReference type="Pfam" id="PF15351">
    <property type="entry name" value="JCAD"/>
    <property type="match status" value="1"/>
</dbReference>